<proteinExistence type="inferred from homology"/>
<sequence>MSMKGKETMSEQNERIVMGKLGSTYGIRGWLKVFSYTDNAESIFDYSPWYLKLKGEWVEYKVESWKRHGQGYVCKLAGLDVREDAQLMTNFEIAIDPASLPELSEDEFYWRELFGMQVFTTKGYNLGEVTDLLETGSNDVLVIKANLKDAFGQKERLIPYLEEQVIKKVDREARRIEVDWDPGF</sequence>
<feature type="chain" id="PRO_1000116589" description="Ribosome maturation factor RimM">
    <location>
        <begin position="1"/>
        <end position="184"/>
    </location>
</feature>
<feature type="domain" description="PRC barrel" evidence="1">
    <location>
        <begin position="104"/>
        <end position="184"/>
    </location>
</feature>
<gene>
    <name evidence="1" type="primary">rimM</name>
    <name type="ordered locus">VS_2557</name>
</gene>
<evidence type="ECO:0000255" key="1">
    <source>
        <dbReference type="HAMAP-Rule" id="MF_00014"/>
    </source>
</evidence>
<comment type="function">
    <text evidence="1">An accessory protein needed during the final step in the assembly of 30S ribosomal subunit, possibly for assembly of the head region. Essential for efficient processing of 16S rRNA. May be needed both before and after RbfA during the maturation of 16S rRNA. It has affinity for free ribosomal 30S subunits but not for 70S ribosomes.</text>
</comment>
<comment type="subunit">
    <text evidence="1">Binds ribosomal protein uS19.</text>
</comment>
<comment type="subcellular location">
    <subcellularLocation>
        <location evidence="1">Cytoplasm</location>
    </subcellularLocation>
</comment>
<comment type="domain">
    <text evidence="1">The PRC barrel domain binds ribosomal protein uS19.</text>
</comment>
<comment type="similarity">
    <text evidence="1">Belongs to the RimM family.</text>
</comment>
<dbReference type="EMBL" id="FM954972">
    <property type="protein sequence ID" value="CAV19735.1"/>
    <property type="molecule type" value="Genomic_DNA"/>
</dbReference>
<dbReference type="SMR" id="B7VK28"/>
<dbReference type="STRING" id="575788.VS_2557"/>
<dbReference type="KEGG" id="vsp:VS_2557"/>
<dbReference type="eggNOG" id="COG0806">
    <property type="taxonomic scope" value="Bacteria"/>
</dbReference>
<dbReference type="HOGENOM" id="CLU_077636_1_0_6"/>
<dbReference type="Proteomes" id="UP000009100">
    <property type="component" value="Chromosome 1"/>
</dbReference>
<dbReference type="GO" id="GO:0005737">
    <property type="term" value="C:cytoplasm"/>
    <property type="evidence" value="ECO:0007669"/>
    <property type="project" value="UniProtKB-SubCell"/>
</dbReference>
<dbReference type="GO" id="GO:0005840">
    <property type="term" value="C:ribosome"/>
    <property type="evidence" value="ECO:0007669"/>
    <property type="project" value="InterPro"/>
</dbReference>
<dbReference type="GO" id="GO:0043022">
    <property type="term" value="F:ribosome binding"/>
    <property type="evidence" value="ECO:0007669"/>
    <property type="project" value="InterPro"/>
</dbReference>
<dbReference type="GO" id="GO:0042274">
    <property type="term" value="P:ribosomal small subunit biogenesis"/>
    <property type="evidence" value="ECO:0007669"/>
    <property type="project" value="UniProtKB-UniRule"/>
</dbReference>
<dbReference type="GO" id="GO:0006364">
    <property type="term" value="P:rRNA processing"/>
    <property type="evidence" value="ECO:0007669"/>
    <property type="project" value="UniProtKB-UniRule"/>
</dbReference>
<dbReference type="Gene3D" id="2.30.30.240">
    <property type="entry name" value="PRC-barrel domain"/>
    <property type="match status" value="1"/>
</dbReference>
<dbReference type="Gene3D" id="2.40.30.60">
    <property type="entry name" value="RimM"/>
    <property type="match status" value="1"/>
</dbReference>
<dbReference type="HAMAP" id="MF_00014">
    <property type="entry name" value="Ribosome_mat_RimM"/>
    <property type="match status" value="1"/>
</dbReference>
<dbReference type="InterPro" id="IPR027275">
    <property type="entry name" value="PRC-brl_dom"/>
</dbReference>
<dbReference type="InterPro" id="IPR011033">
    <property type="entry name" value="PRC_barrel-like_sf"/>
</dbReference>
<dbReference type="InterPro" id="IPR011961">
    <property type="entry name" value="RimM"/>
</dbReference>
<dbReference type="InterPro" id="IPR002676">
    <property type="entry name" value="RimM_N"/>
</dbReference>
<dbReference type="InterPro" id="IPR036976">
    <property type="entry name" value="RimM_N_sf"/>
</dbReference>
<dbReference type="InterPro" id="IPR009000">
    <property type="entry name" value="Transl_B-barrel_sf"/>
</dbReference>
<dbReference type="NCBIfam" id="TIGR02273">
    <property type="entry name" value="16S_RimM"/>
    <property type="match status" value="1"/>
</dbReference>
<dbReference type="PANTHER" id="PTHR33692">
    <property type="entry name" value="RIBOSOME MATURATION FACTOR RIMM"/>
    <property type="match status" value="1"/>
</dbReference>
<dbReference type="PANTHER" id="PTHR33692:SF1">
    <property type="entry name" value="RIBOSOME MATURATION FACTOR RIMM"/>
    <property type="match status" value="1"/>
</dbReference>
<dbReference type="Pfam" id="PF05239">
    <property type="entry name" value="PRC"/>
    <property type="match status" value="1"/>
</dbReference>
<dbReference type="Pfam" id="PF01782">
    <property type="entry name" value="RimM"/>
    <property type="match status" value="1"/>
</dbReference>
<dbReference type="SUPFAM" id="SSF50346">
    <property type="entry name" value="PRC-barrel domain"/>
    <property type="match status" value="1"/>
</dbReference>
<dbReference type="SUPFAM" id="SSF50447">
    <property type="entry name" value="Translation proteins"/>
    <property type="match status" value="1"/>
</dbReference>
<protein>
    <recommendedName>
        <fullName evidence="1">Ribosome maturation factor RimM</fullName>
    </recommendedName>
</protein>
<name>RIMM_VIBA3</name>
<accession>B7VK28</accession>
<reference key="1">
    <citation type="submission" date="2009-02" db="EMBL/GenBank/DDBJ databases">
        <title>Vibrio splendidus str. LGP32 complete genome.</title>
        <authorList>
            <person name="Mazel D."/>
            <person name="Le Roux F."/>
        </authorList>
    </citation>
    <scope>NUCLEOTIDE SEQUENCE [LARGE SCALE GENOMIC DNA]</scope>
    <source>
        <strain>LGP32</strain>
    </source>
</reference>
<organism>
    <name type="scientific">Vibrio atlanticus (strain LGP32)</name>
    <name type="common">Vibrio splendidus (strain Mel32)</name>
    <dbReference type="NCBI Taxonomy" id="575788"/>
    <lineage>
        <taxon>Bacteria</taxon>
        <taxon>Pseudomonadati</taxon>
        <taxon>Pseudomonadota</taxon>
        <taxon>Gammaproteobacteria</taxon>
        <taxon>Vibrionales</taxon>
        <taxon>Vibrionaceae</taxon>
        <taxon>Vibrio</taxon>
    </lineage>
</organism>
<keyword id="KW-0143">Chaperone</keyword>
<keyword id="KW-0963">Cytoplasm</keyword>
<keyword id="KW-0690">Ribosome biogenesis</keyword>
<keyword id="KW-0698">rRNA processing</keyword>